<proteinExistence type="inferred from homology"/>
<keyword id="KW-0067">ATP-binding</keyword>
<keyword id="KW-0963">Cytoplasm</keyword>
<keyword id="KW-0315">Glutamine amidotransferase</keyword>
<keyword id="KW-0378">Hydrolase</keyword>
<keyword id="KW-0436">Ligase</keyword>
<keyword id="KW-0547">Nucleotide-binding</keyword>
<keyword id="KW-0658">Purine biosynthesis</keyword>
<keyword id="KW-1185">Reference proteome</keyword>
<accession>Q8TPF0</accession>
<reference key="1">
    <citation type="journal article" date="2002" name="Genome Res.">
        <title>The genome of Methanosarcina acetivorans reveals extensive metabolic and physiological diversity.</title>
        <authorList>
            <person name="Galagan J.E."/>
            <person name="Nusbaum C."/>
            <person name="Roy A."/>
            <person name="Endrizzi M.G."/>
            <person name="Macdonald P."/>
            <person name="FitzHugh W."/>
            <person name="Calvo S."/>
            <person name="Engels R."/>
            <person name="Smirnov S."/>
            <person name="Atnoor D."/>
            <person name="Brown A."/>
            <person name="Allen N."/>
            <person name="Naylor J."/>
            <person name="Stange-Thomann N."/>
            <person name="DeArellano K."/>
            <person name="Johnson R."/>
            <person name="Linton L."/>
            <person name="McEwan P."/>
            <person name="McKernan K."/>
            <person name="Talamas J."/>
            <person name="Tirrell A."/>
            <person name="Ye W."/>
            <person name="Zimmer A."/>
            <person name="Barber R.D."/>
            <person name="Cann I."/>
            <person name="Graham D.E."/>
            <person name="Grahame D.A."/>
            <person name="Guss A.M."/>
            <person name="Hedderich R."/>
            <person name="Ingram-Smith C."/>
            <person name="Kuettner H.C."/>
            <person name="Krzycki J.A."/>
            <person name="Leigh J.A."/>
            <person name="Li W."/>
            <person name="Liu J."/>
            <person name="Mukhopadhyay B."/>
            <person name="Reeve J.N."/>
            <person name="Smith K."/>
            <person name="Springer T.A."/>
            <person name="Umayam L.A."/>
            <person name="White O."/>
            <person name="White R.H."/>
            <person name="de Macario E.C."/>
            <person name="Ferry J.G."/>
            <person name="Jarrell K.F."/>
            <person name="Jing H."/>
            <person name="Macario A.J.L."/>
            <person name="Paulsen I.T."/>
            <person name="Pritchett M."/>
            <person name="Sowers K.R."/>
            <person name="Swanson R.V."/>
            <person name="Zinder S.H."/>
            <person name="Lander E."/>
            <person name="Metcalf W.W."/>
            <person name="Birren B."/>
        </authorList>
    </citation>
    <scope>NUCLEOTIDE SEQUENCE [LARGE SCALE GENOMIC DNA]</scope>
    <source>
        <strain>ATCC 35395 / DSM 2834 / JCM 12185 / C2A</strain>
    </source>
</reference>
<protein>
    <recommendedName>
        <fullName evidence="1">Phosphoribosylformylglycinamidine synthase subunit PurQ</fullName>
        <shortName evidence="1">FGAM synthase</shortName>
        <ecNumber evidence="1">6.3.5.3</ecNumber>
    </recommendedName>
    <alternativeName>
        <fullName evidence="1">Formylglycinamide ribonucleotide amidotransferase subunit I</fullName>
        <shortName evidence="1">FGAR amidotransferase I</shortName>
        <shortName evidence="1">FGAR-AT I</shortName>
    </alternativeName>
    <alternativeName>
        <fullName evidence="1">Glutaminase PurQ</fullName>
        <ecNumber evidence="1">3.5.1.2</ecNumber>
    </alternativeName>
    <alternativeName>
        <fullName evidence="1">Phosphoribosylformylglycinamidine synthase subunit I</fullName>
    </alternativeName>
</protein>
<gene>
    <name evidence="1" type="primary">purQ</name>
    <name type="ordered locus">MA_1963</name>
</gene>
<organism>
    <name type="scientific">Methanosarcina acetivorans (strain ATCC 35395 / DSM 2834 / JCM 12185 / C2A)</name>
    <dbReference type="NCBI Taxonomy" id="188937"/>
    <lineage>
        <taxon>Archaea</taxon>
        <taxon>Methanobacteriati</taxon>
        <taxon>Methanobacteriota</taxon>
        <taxon>Stenosarchaea group</taxon>
        <taxon>Methanomicrobia</taxon>
        <taxon>Methanosarcinales</taxon>
        <taxon>Methanosarcinaceae</taxon>
        <taxon>Methanosarcina</taxon>
    </lineage>
</organism>
<name>PURQ_METAC</name>
<evidence type="ECO:0000255" key="1">
    <source>
        <dbReference type="HAMAP-Rule" id="MF_00421"/>
    </source>
</evidence>
<feature type="chain" id="PRO_0000100607" description="Phosphoribosylformylglycinamidine synthase subunit PurQ">
    <location>
        <begin position="1"/>
        <end position="232"/>
    </location>
</feature>
<feature type="domain" description="Glutamine amidotransferase type-1" evidence="1">
    <location>
        <begin position="2"/>
        <end position="232"/>
    </location>
</feature>
<feature type="active site" description="Nucleophile" evidence="1">
    <location>
        <position position="86"/>
    </location>
</feature>
<feature type="active site" evidence="1">
    <location>
        <position position="203"/>
    </location>
</feature>
<feature type="active site" evidence="1">
    <location>
        <position position="205"/>
    </location>
</feature>
<dbReference type="EC" id="6.3.5.3" evidence="1"/>
<dbReference type="EC" id="3.5.1.2" evidence="1"/>
<dbReference type="EMBL" id="AE010299">
    <property type="protein sequence ID" value="AAM05366.1"/>
    <property type="molecule type" value="Genomic_DNA"/>
</dbReference>
<dbReference type="RefSeq" id="WP_011021958.1">
    <property type="nucleotide sequence ID" value="NC_003552.1"/>
</dbReference>
<dbReference type="SMR" id="Q8TPF0"/>
<dbReference type="FunCoup" id="Q8TPF0">
    <property type="interactions" value="19"/>
</dbReference>
<dbReference type="STRING" id="188937.MA_1963"/>
<dbReference type="EnsemblBacteria" id="AAM05366">
    <property type="protein sequence ID" value="AAM05366"/>
    <property type="gene ID" value="MA_1963"/>
</dbReference>
<dbReference type="GeneID" id="1473852"/>
<dbReference type="KEGG" id="mac:MA_1963"/>
<dbReference type="HOGENOM" id="CLU_001031_3_1_2"/>
<dbReference type="InParanoid" id="Q8TPF0"/>
<dbReference type="OrthoDB" id="6486at2157"/>
<dbReference type="PhylomeDB" id="Q8TPF0"/>
<dbReference type="UniPathway" id="UPA00074">
    <property type="reaction ID" value="UER00128"/>
</dbReference>
<dbReference type="Proteomes" id="UP000002487">
    <property type="component" value="Chromosome"/>
</dbReference>
<dbReference type="GO" id="GO:0005737">
    <property type="term" value="C:cytoplasm"/>
    <property type="evidence" value="ECO:0007669"/>
    <property type="project" value="UniProtKB-SubCell"/>
</dbReference>
<dbReference type="GO" id="GO:0005524">
    <property type="term" value="F:ATP binding"/>
    <property type="evidence" value="ECO:0007669"/>
    <property type="project" value="UniProtKB-KW"/>
</dbReference>
<dbReference type="GO" id="GO:0004359">
    <property type="term" value="F:glutaminase activity"/>
    <property type="evidence" value="ECO:0007669"/>
    <property type="project" value="UniProtKB-EC"/>
</dbReference>
<dbReference type="GO" id="GO:0004642">
    <property type="term" value="F:phosphoribosylformylglycinamidine synthase activity"/>
    <property type="evidence" value="ECO:0007669"/>
    <property type="project" value="UniProtKB-UniRule"/>
</dbReference>
<dbReference type="GO" id="GO:0006189">
    <property type="term" value="P:'de novo' IMP biosynthetic process"/>
    <property type="evidence" value="ECO:0007669"/>
    <property type="project" value="UniProtKB-UniRule"/>
</dbReference>
<dbReference type="CDD" id="cd01740">
    <property type="entry name" value="GATase1_FGAR_AT"/>
    <property type="match status" value="1"/>
</dbReference>
<dbReference type="Gene3D" id="3.40.50.880">
    <property type="match status" value="1"/>
</dbReference>
<dbReference type="HAMAP" id="MF_00421">
    <property type="entry name" value="PurQ"/>
    <property type="match status" value="1"/>
</dbReference>
<dbReference type="InterPro" id="IPR029062">
    <property type="entry name" value="Class_I_gatase-like"/>
</dbReference>
<dbReference type="InterPro" id="IPR010075">
    <property type="entry name" value="PRibForGlyAmidine_synth_PurQ"/>
</dbReference>
<dbReference type="NCBIfam" id="TIGR01737">
    <property type="entry name" value="FGAM_synth_I"/>
    <property type="match status" value="1"/>
</dbReference>
<dbReference type="NCBIfam" id="NF002957">
    <property type="entry name" value="PRK03619.1"/>
    <property type="match status" value="1"/>
</dbReference>
<dbReference type="PANTHER" id="PTHR47552">
    <property type="entry name" value="PHOSPHORIBOSYLFORMYLGLYCINAMIDINE SYNTHASE SUBUNIT PURQ"/>
    <property type="match status" value="1"/>
</dbReference>
<dbReference type="PANTHER" id="PTHR47552:SF1">
    <property type="entry name" value="PHOSPHORIBOSYLFORMYLGLYCINAMIDINE SYNTHASE SUBUNIT PURQ"/>
    <property type="match status" value="1"/>
</dbReference>
<dbReference type="Pfam" id="PF13507">
    <property type="entry name" value="GATase_5"/>
    <property type="match status" value="1"/>
</dbReference>
<dbReference type="PIRSF" id="PIRSF001586">
    <property type="entry name" value="FGAM_synth_I"/>
    <property type="match status" value="1"/>
</dbReference>
<dbReference type="SMART" id="SM01211">
    <property type="entry name" value="GATase_5"/>
    <property type="match status" value="1"/>
</dbReference>
<dbReference type="SUPFAM" id="SSF52317">
    <property type="entry name" value="Class I glutamine amidotransferase-like"/>
    <property type="match status" value="1"/>
</dbReference>
<dbReference type="PROSITE" id="PS51273">
    <property type="entry name" value="GATASE_TYPE_1"/>
    <property type="match status" value="1"/>
</dbReference>
<sequence>MKIAIIQFGGTNCDMDVLHVLKDVVGVDAETVWYKEENLTGFDGVVVPGGFSYGDYLRAGAIAARTPIMDSVKKIAAEGKPVLGICNGFQVLTEARLLAGALTTNEYPKFRCHWTNLRVETADTPFTSKFRKGEVIRMPIAHMEGKFYAEESTLAELDENEQVVFRYVDEKGRVTDEANPNGSLENIAGILNASRNILGLMPHPERASESILGSDDGRKVFESMADYITENF</sequence>
<comment type="function">
    <text evidence="1">Part of the phosphoribosylformylglycinamidine synthase complex involved in the purines biosynthetic pathway. Catalyzes the ATP-dependent conversion of formylglycinamide ribonucleotide (FGAR) and glutamine to yield formylglycinamidine ribonucleotide (FGAM) and glutamate. The FGAM synthase complex is composed of three subunits. PurQ produces an ammonia molecule by converting glutamine to glutamate. PurL transfers the ammonia molecule to FGAR to form FGAM in an ATP-dependent manner. PurS interacts with PurQ and PurL and is thought to assist in the transfer of the ammonia molecule from PurQ to PurL.</text>
</comment>
<comment type="catalytic activity">
    <reaction evidence="1">
        <text>N(2)-formyl-N(1)-(5-phospho-beta-D-ribosyl)glycinamide + L-glutamine + ATP + H2O = 2-formamido-N(1)-(5-O-phospho-beta-D-ribosyl)acetamidine + L-glutamate + ADP + phosphate + H(+)</text>
        <dbReference type="Rhea" id="RHEA:17129"/>
        <dbReference type="ChEBI" id="CHEBI:15377"/>
        <dbReference type="ChEBI" id="CHEBI:15378"/>
        <dbReference type="ChEBI" id="CHEBI:29985"/>
        <dbReference type="ChEBI" id="CHEBI:30616"/>
        <dbReference type="ChEBI" id="CHEBI:43474"/>
        <dbReference type="ChEBI" id="CHEBI:58359"/>
        <dbReference type="ChEBI" id="CHEBI:147286"/>
        <dbReference type="ChEBI" id="CHEBI:147287"/>
        <dbReference type="ChEBI" id="CHEBI:456216"/>
        <dbReference type="EC" id="6.3.5.3"/>
    </reaction>
</comment>
<comment type="catalytic activity">
    <reaction evidence="1">
        <text>L-glutamine + H2O = L-glutamate + NH4(+)</text>
        <dbReference type="Rhea" id="RHEA:15889"/>
        <dbReference type="ChEBI" id="CHEBI:15377"/>
        <dbReference type="ChEBI" id="CHEBI:28938"/>
        <dbReference type="ChEBI" id="CHEBI:29985"/>
        <dbReference type="ChEBI" id="CHEBI:58359"/>
        <dbReference type="EC" id="3.5.1.2"/>
    </reaction>
</comment>
<comment type="pathway">
    <text evidence="1">Purine metabolism; IMP biosynthesis via de novo pathway; 5-amino-1-(5-phospho-D-ribosyl)imidazole from N(2)-formyl-N(1)-(5-phospho-D-ribosyl)glycinamide: step 1/2.</text>
</comment>
<comment type="subunit">
    <text evidence="1">Part of the FGAM synthase complex composed of 1 PurL, 1 PurQ and 2 PurS subunits.</text>
</comment>
<comment type="subcellular location">
    <subcellularLocation>
        <location evidence="1">Cytoplasm</location>
    </subcellularLocation>
</comment>